<evidence type="ECO:0000250" key="1"/>
<evidence type="ECO:0000250" key="2">
    <source>
        <dbReference type="UniProtKB" id="P36877"/>
    </source>
</evidence>
<evidence type="ECO:0000250" key="3">
    <source>
        <dbReference type="UniProtKB" id="Q00005"/>
    </source>
</evidence>
<evidence type="ECO:0000305" key="4"/>
<dbReference type="EMBL" id="BT020863">
    <property type="protein sequence ID" value="AAX08880.1"/>
    <property type="molecule type" value="mRNA"/>
</dbReference>
<dbReference type="EMBL" id="BC118167">
    <property type="protein sequence ID" value="AAI18168.1"/>
    <property type="molecule type" value="mRNA"/>
</dbReference>
<dbReference type="RefSeq" id="NP_001259014.1">
    <property type="nucleotide sequence ID" value="NM_001272085.1"/>
</dbReference>
<dbReference type="RefSeq" id="XP_010805748.1">
    <property type="nucleotide sequence ID" value="XM_010807446.2"/>
</dbReference>
<dbReference type="SMR" id="Q5E9Q7"/>
<dbReference type="FunCoup" id="Q5E9Q7">
    <property type="interactions" value="1899"/>
</dbReference>
<dbReference type="STRING" id="9913.ENSBTAP00000071664"/>
<dbReference type="PaxDb" id="9913-ENSBTAP00000002427"/>
<dbReference type="Ensembl" id="ENSBTAT00000002427.4">
    <property type="protein sequence ID" value="ENSBTAP00000002427.2"/>
    <property type="gene ID" value="ENSBTAG00000001862.5"/>
</dbReference>
<dbReference type="GeneID" id="509290"/>
<dbReference type="KEGG" id="bta:509290"/>
<dbReference type="CTD" id="5521"/>
<dbReference type="VEuPathDB" id="HostDB:ENSBTAG00000001862"/>
<dbReference type="VGNC" id="VGNC:33256">
    <property type="gene designation" value="PPP2R2B"/>
</dbReference>
<dbReference type="eggNOG" id="KOG1354">
    <property type="taxonomic scope" value="Eukaryota"/>
</dbReference>
<dbReference type="GeneTree" id="ENSGT00950000182864"/>
<dbReference type="HOGENOM" id="CLU_021713_3_3_1"/>
<dbReference type="InParanoid" id="Q5E9Q7"/>
<dbReference type="OrthoDB" id="6274823at2759"/>
<dbReference type="TreeFam" id="TF105553"/>
<dbReference type="Proteomes" id="UP000009136">
    <property type="component" value="Chromosome 7"/>
</dbReference>
<dbReference type="Bgee" id="ENSBTAG00000001862">
    <property type="expression patterns" value="Expressed in floor plate of diencephalon and 95 other cell types or tissues"/>
</dbReference>
<dbReference type="GO" id="GO:0005856">
    <property type="term" value="C:cytoskeleton"/>
    <property type="evidence" value="ECO:0007669"/>
    <property type="project" value="UniProtKB-SubCell"/>
</dbReference>
<dbReference type="GO" id="GO:0005829">
    <property type="term" value="C:cytosol"/>
    <property type="evidence" value="ECO:0000318"/>
    <property type="project" value="GO_Central"/>
</dbReference>
<dbReference type="GO" id="GO:0016020">
    <property type="term" value="C:membrane"/>
    <property type="evidence" value="ECO:0007669"/>
    <property type="project" value="UniProtKB-SubCell"/>
</dbReference>
<dbReference type="GO" id="GO:0000159">
    <property type="term" value="C:protein phosphatase type 2A complex"/>
    <property type="evidence" value="ECO:0000318"/>
    <property type="project" value="GO_Central"/>
</dbReference>
<dbReference type="GO" id="GO:0019888">
    <property type="term" value="F:protein phosphatase regulator activity"/>
    <property type="evidence" value="ECO:0000318"/>
    <property type="project" value="GO_Central"/>
</dbReference>
<dbReference type="FunFam" id="2.130.10.10:FF:000002">
    <property type="entry name" value="Serine/threonine-protein phosphatase 2A 55 kDa regulatory subunit B"/>
    <property type="match status" value="1"/>
</dbReference>
<dbReference type="Gene3D" id="2.130.10.10">
    <property type="entry name" value="YVTN repeat-like/Quinoprotein amine dehydrogenase"/>
    <property type="match status" value="1"/>
</dbReference>
<dbReference type="InterPro" id="IPR000009">
    <property type="entry name" value="PP2A_PR55"/>
</dbReference>
<dbReference type="InterPro" id="IPR018067">
    <property type="entry name" value="PP2A_PR55_CS"/>
</dbReference>
<dbReference type="InterPro" id="IPR015943">
    <property type="entry name" value="WD40/YVTN_repeat-like_dom_sf"/>
</dbReference>
<dbReference type="InterPro" id="IPR036322">
    <property type="entry name" value="WD40_repeat_dom_sf"/>
</dbReference>
<dbReference type="InterPro" id="IPR001680">
    <property type="entry name" value="WD40_rpt"/>
</dbReference>
<dbReference type="PANTHER" id="PTHR11871">
    <property type="entry name" value="PROTEIN PHOSPHATASE PP2A REGULATORY SUBUNIT B"/>
    <property type="match status" value="1"/>
</dbReference>
<dbReference type="PIRSF" id="PIRSF037309">
    <property type="entry name" value="PP2A_PR55"/>
    <property type="match status" value="1"/>
</dbReference>
<dbReference type="PRINTS" id="PR00600">
    <property type="entry name" value="PP2APR55"/>
</dbReference>
<dbReference type="SMART" id="SM00320">
    <property type="entry name" value="WD40"/>
    <property type="match status" value="6"/>
</dbReference>
<dbReference type="SUPFAM" id="SSF50978">
    <property type="entry name" value="WD40 repeat-like"/>
    <property type="match status" value="1"/>
</dbReference>
<dbReference type="PROSITE" id="PS01024">
    <property type="entry name" value="PR55_1"/>
    <property type="match status" value="1"/>
</dbReference>
<dbReference type="PROSITE" id="PS01025">
    <property type="entry name" value="PR55_2"/>
    <property type="match status" value="1"/>
</dbReference>
<dbReference type="PROSITE" id="PS00678">
    <property type="entry name" value="WD_REPEATS_1"/>
    <property type="match status" value="1"/>
</dbReference>
<comment type="function">
    <text evidence="1">The B regulatory subunit might modulate substrate selectivity and catalytic activity, and might also direct the localization of the catalytic enzyme to a particular subcellular compartment.</text>
</comment>
<comment type="subunit">
    <text evidence="1 2 3">PP2A consists of a common heterodimeric core enzyme, composed of a 36 kDa catalytic subunit (subunit C) and a 65 kDa constant regulatory subunit (PR65 or subunit A), that associates with a variety of regulatory subunits. Proteins that associate with the core dimer include three families of regulatory subunits B (the R2/B/PR55/B55, R3/B''/PR72/PR130/PR59 and R5/B'/B56 families), the 48 kDa variable regulatory subunit, viral proteins, and cell signaling molecules (By similarity). Interacts with TOMM22 (By similarity). Interacts with IER5 (via N- and C-terminal regions) (By similarity).</text>
</comment>
<comment type="subcellular location">
    <subcellularLocation>
        <location evidence="1">Cytoplasm</location>
    </subcellularLocation>
    <subcellularLocation>
        <location evidence="1">Cytoplasm</location>
        <location evidence="1">Cytoskeleton</location>
    </subcellularLocation>
    <subcellularLocation>
        <location evidence="1">Membrane</location>
    </subcellularLocation>
</comment>
<comment type="similarity">
    <text evidence="4">Belongs to the phosphatase 2A regulatory subunit B family.</text>
</comment>
<accession>Q5E9Q7</accession>
<organism>
    <name type="scientific">Bos taurus</name>
    <name type="common">Bovine</name>
    <dbReference type="NCBI Taxonomy" id="9913"/>
    <lineage>
        <taxon>Eukaryota</taxon>
        <taxon>Metazoa</taxon>
        <taxon>Chordata</taxon>
        <taxon>Craniata</taxon>
        <taxon>Vertebrata</taxon>
        <taxon>Euteleostomi</taxon>
        <taxon>Mammalia</taxon>
        <taxon>Eutheria</taxon>
        <taxon>Laurasiatheria</taxon>
        <taxon>Artiodactyla</taxon>
        <taxon>Ruminantia</taxon>
        <taxon>Pecora</taxon>
        <taxon>Bovidae</taxon>
        <taxon>Bovinae</taxon>
        <taxon>Bos</taxon>
    </lineage>
</organism>
<sequence>MEEDIDTRKINNSFLRDHSYATEADIISTVEFNHTGELLATGDKGGRVVIFQREQESKNQVHRRGEYNVYSTFQSHEPEFDYLKSLEIEEKINKIRWLPQQNAAYFLLSTNDKTVKLWKVSERDKRPEGYNLKDEEGRLRDPATITTLRVPVLRPMDLMVEATPRRVFANAHTYHINSISVNSDYETYMSADDLRINLWNFEITNQSFNIVDIKPANMEELTEVITAAEFHPHHCNTFVYSSSKGTIRLCDMRASALCDRHTKFFEEPEDPSNRSFFSEIISSISDVKFSHSGRYIMTRDYLTVKVWDLNMENRPIETYQVHDYLRSKLCSLYENDCIFDKFECVWNGSDSVIMTGSYNNFFRMFDRNTKRDVTLEASRENSKPRAILKPRKVCVGGKRRKDEISVDSLDFSKKILHTAWHPSENIIAVAATNNLYIFQDKVN</sequence>
<proteinExistence type="evidence at transcript level"/>
<keyword id="KW-0963">Cytoplasm</keyword>
<keyword id="KW-0206">Cytoskeleton</keyword>
<keyword id="KW-0472">Membrane</keyword>
<keyword id="KW-0597">Phosphoprotein</keyword>
<keyword id="KW-1185">Reference proteome</keyword>
<keyword id="KW-0677">Repeat</keyword>
<keyword id="KW-0853">WD repeat</keyword>
<name>2ABB_BOVIN</name>
<reference key="1">
    <citation type="journal article" date="2005" name="BMC Genomics">
        <title>Characterization of 954 bovine full-CDS cDNA sequences.</title>
        <authorList>
            <person name="Harhay G.P."/>
            <person name="Sonstegard T.S."/>
            <person name="Keele J.W."/>
            <person name="Heaton M.P."/>
            <person name="Clawson M.L."/>
            <person name="Snelling W.M."/>
            <person name="Wiedmann R.T."/>
            <person name="Van Tassell C.P."/>
            <person name="Smith T.P.L."/>
        </authorList>
    </citation>
    <scope>NUCLEOTIDE SEQUENCE [LARGE SCALE MRNA]</scope>
</reference>
<reference key="2">
    <citation type="submission" date="2006-06" db="EMBL/GenBank/DDBJ databases">
        <authorList>
            <consortium name="NIH - Mammalian Gene Collection (MGC) project"/>
        </authorList>
    </citation>
    <scope>NUCLEOTIDE SEQUENCE [LARGE SCALE MRNA]</scope>
    <source>
        <strain>Hereford</strain>
        <tissue>Thalamus</tissue>
    </source>
</reference>
<protein>
    <recommendedName>
        <fullName>Serine/threonine-protein phosphatase 2A 55 kDa regulatory subunit B beta isoform</fullName>
    </recommendedName>
    <alternativeName>
        <fullName>PP2A subunit B isoform B55-beta</fullName>
    </alternativeName>
    <alternativeName>
        <fullName>PP2A subunit B isoform PR55-beta</fullName>
    </alternativeName>
    <alternativeName>
        <fullName>PP2A subunit B isoform R2-beta</fullName>
    </alternativeName>
    <alternativeName>
        <fullName>PP2A subunit B isoform beta</fullName>
    </alternativeName>
</protein>
<feature type="chain" id="PRO_0000287128" description="Serine/threonine-protein phosphatase 2A 55 kDa regulatory subunit B beta isoform">
    <location>
        <begin position="1"/>
        <end position="443"/>
    </location>
</feature>
<feature type="repeat" description="WD 1">
    <location>
        <begin position="22"/>
        <end position="61"/>
    </location>
</feature>
<feature type="repeat" description="WD 2">
    <location>
        <begin position="87"/>
        <end position="128"/>
    </location>
</feature>
<feature type="repeat" description="WD 3">
    <location>
        <begin position="171"/>
        <end position="209"/>
    </location>
</feature>
<feature type="repeat" description="WD 4">
    <location>
        <begin position="220"/>
        <end position="260"/>
    </location>
</feature>
<feature type="repeat" description="WD 5">
    <location>
        <begin position="279"/>
        <end position="317"/>
    </location>
</feature>
<feature type="repeat" description="WD 6">
    <location>
        <begin position="334"/>
        <end position="375"/>
    </location>
</feature>
<feature type="repeat" description="WD 7">
    <location>
        <begin position="410"/>
        <end position="442"/>
    </location>
</feature>
<feature type="modified residue" description="Phosphoserine" evidence="2">
    <location>
        <position position="275"/>
    </location>
</feature>
<feature type="modified residue" description="Phosphotyrosine" evidence="2">
    <location>
        <position position="295"/>
    </location>
</feature>
<feature type="modified residue" description="Phosphothreonine" evidence="2">
    <location>
        <position position="298"/>
    </location>
</feature>
<gene>
    <name type="primary">PPP2R2B</name>
</gene>